<reference key="1">
    <citation type="submission" date="2006-02" db="EMBL/GenBank/DDBJ databases">
        <title>Complete sequence of chromosome of Rhodoferax ferrireducens DSM 15236.</title>
        <authorList>
            <person name="Copeland A."/>
            <person name="Lucas S."/>
            <person name="Lapidus A."/>
            <person name="Barry K."/>
            <person name="Detter J.C."/>
            <person name="Glavina del Rio T."/>
            <person name="Hammon N."/>
            <person name="Israni S."/>
            <person name="Pitluck S."/>
            <person name="Brettin T."/>
            <person name="Bruce D."/>
            <person name="Han C."/>
            <person name="Tapia R."/>
            <person name="Gilna P."/>
            <person name="Kiss H."/>
            <person name="Schmutz J."/>
            <person name="Larimer F."/>
            <person name="Land M."/>
            <person name="Kyrpides N."/>
            <person name="Ivanova N."/>
            <person name="Richardson P."/>
        </authorList>
    </citation>
    <scope>NUCLEOTIDE SEQUENCE [LARGE SCALE GENOMIC DNA]</scope>
    <source>
        <strain>ATCC BAA-621 / DSM 15236 / T118</strain>
    </source>
</reference>
<evidence type="ECO:0000255" key="1">
    <source>
        <dbReference type="HAMAP-Rule" id="MF_00104"/>
    </source>
</evidence>
<organism>
    <name type="scientific">Albidiferax ferrireducens (strain ATCC BAA-621 / DSM 15236 / T118)</name>
    <name type="common">Rhodoferax ferrireducens</name>
    <dbReference type="NCBI Taxonomy" id="338969"/>
    <lineage>
        <taxon>Bacteria</taxon>
        <taxon>Pseudomonadati</taxon>
        <taxon>Pseudomonadota</taxon>
        <taxon>Betaproteobacteria</taxon>
        <taxon>Burkholderiales</taxon>
        <taxon>Comamonadaceae</taxon>
        <taxon>Rhodoferax</taxon>
    </lineage>
</organism>
<name>RNC_ALBFT</name>
<keyword id="KW-0963">Cytoplasm</keyword>
<keyword id="KW-0255">Endonuclease</keyword>
<keyword id="KW-0378">Hydrolase</keyword>
<keyword id="KW-0460">Magnesium</keyword>
<keyword id="KW-0479">Metal-binding</keyword>
<keyword id="KW-0507">mRNA processing</keyword>
<keyword id="KW-0540">Nuclease</keyword>
<keyword id="KW-1185">Reference proteome</keyword>
<keyword id="KW-0694">RNA-binding</keyword>
<keyword id="KW-0698">rRNA processing</keyword>
<keyword id="KW-0699">rRNA-binding</keyword>
<keyword id="KW-0819">tRNA processing</keyword>
<proteinExistence type="inferred from homology"/>
<accession>Q21XN1</accession>
<dbReference type="EC" id="3.1.26.3" evidence="1"/>
<dbReference type="EMBL" id="CP000267">
    <property type="protein sequence ID" value="ABD69472.1"/>
    <property type="molecule type" value="Genomic_DNA"/>
</dbReference>
<dbReference type="RefSeq" id="WP_011464040.1">
    <property type="nucleotide sequence ID" value="NC_007908.1"/>
</dbReference>
<dbReference type="SMR" id="Q21XN1"/>
<dbReference type="STRING" id="338969.Rfer_1743"/>
<dbReference type="KEGG" id="rfr:Rfer_1743"/>
<dbReference type="eggNOG" id="COG0571">
    <property type="taxonomic scope" value="Bacteria"/>
</dbReference>
<dbReference type="HOGENOM" id="CLU_000907_1_1_4"/>
<dbReference type="OrthoDB" id="9805026at2"/>
<dbReference type="Proteomes" id="UP000008332">
    <property type="component" value="Chromosome"/>
</dbReference>
<dbReference type="GO" id="GO:0005737">
    <property type="term" value="C:cytoplasm"/>
    <property type="evidence" value="ECO:0007669"/>
    <property type="project" value="UniProtKB-SubCell"/>
</dbReference>
<dbReference type="GO" id="GO:0003725">
    <property type="term" value="F:double-stranded RNA binding"/>
    <property type="evidence" value="ECO:0007669"/>
    <property type="project" value="TreeGrafter"/>
</dbReference>
<dbReference type="GO" id="GO:0046872">
    <property type="term" value="F:metal ion binding"/>
    <property type="evidence" value="ECO:0007669"/>
    <property type="project" value="UniProtKB-KW"/>
</dbReference>
<dbReference type="GO" id="GO:0004525">
    <property type="term" value="F:ribonuclease III activity"/>
    <property type="evidence" value="ECO:0007669"/>
    <property type="project" value="UniProtKB-UniRule"/>
</dbReference>
<dbReference type="GO" id="GO:0019843">
    <property type="term" value="F:rRNA binding"/>
    <property type="evidence" value="ECO:0007669"/>
    <property type="project" value="UniProtKB-KW"/>
</dbReference>
<dbReference type="GO" id="GO:0006397">
    <property type="term" value="P:mRNA processing"/>
    <property type="evidence" value="ECO:0007669"/>
    <property type="project" value="UniProtKB-UniRule"/>
</dbReference>
<dbReference type="GO" id="GO:0010468">
    <property type="term" value="P:regulation of gene expression"/>
    <property type="evidence" value="ECO:0007669"/>
    <property type="project" value="TreeGrafter"/>
</dbReference>
<dbReference type="GO" id="GO:0006364">
    <property type="term" value="P:rRNA processing"/>
    <property type="evidence" value="ECO:0007669"/>
    <property type="project" value="UniProtKB-UniRule"/>
</dbReference>
<dbReference type="GO" id="GO:0008033">
    <property type="term" value="P:tRNA processing"/>
    <property type="evidence" value="ECO:0007669"/>
    <property type="project" value="UniProtKB-KW"/>
</dbReference>
<dbReference type="CDD" id="cd10845">
    <property type="entry name" value="DSRM_RNAse_III_family"/>
    <property type="match status" value="1"/>
</dbReference>
<dbReference type="CDD" id="cd00593">
    <property type="entry name" value="RIBOc"/>
    <property type="match status" value="1"/>
</dbReference>
<dbReference type="FunFam" id="1.10.1520.10:FF:000001">
    <property type="entry name" value="Ribonuclease 3"/>
    <property type="match status" value="1"/>
</dbReference>
<dbReference type="Gene3D" id="3.30.160.20">
    <property type="match status" value="1"/>
</dbReference>
<dbReference type="Gene3D" id="1.10.1520.10">
    <property type="entry name" value="Ribonuclease III domain"/>
    <property type="match status" value="1"/>
</dbReference>
<dbReference type="HAMAP" id="MF_00104">
    <property type="entry name" value="RNase_III"/>
    <property type="match status" value="1"/>
</dbReference>
<dbReference type="InterPro" id="IPR014720">
    <property type="entry name" value="dsRBD_dom"/>
</dbReference>
<dbReference type="InterPro" id="IPR011907">
    <property type="entry name" value="RNase_III"/>
</dbReference>
<dbReference type="InterPro" id="IPR000999">
    <property type="entry name" value="RNase_III_dom"/>
</dbReference>
<dbReference type="InterPro" id="IPR036389">
    <property type="entry name" value="RNase_III_sf"/>
</dbReference>
<dbReference type="NCBIfam" id="TIGR02191">
    <property type="entry name" value="RNaseIII"/>
    <property type="match status" value="1"/>
</dbReference>
<dbReference type="PANTHER" id="PTHR11207:SF0">
    <property type="entry name" value="RIBONUCLEASE 3"/>
    <property type="match status" value="1"/>
</dbReference>
<dbReference type="PANTHER" id="PTHR11207">
    <property type="entry name" value="RIBONUCLEASE III"/>
    <property type="match status" value="1"/>
</dbReference>
<dbReference type="Pfam" id="PF00035">
    <property type="entry name" value="dsrm"/>
    <property type="match status" value="1"/>
</dbReference>
<dbReference type="Pfam" id="PF14622">
    <property type="entry name" value="Ribonucleas_3_3"/>
    <property type="match status" value="1"/>
</dbReference>
<dbReference type="SMART" id="SM00358">
    <property type="entry name" value="DSRM"/>
    <property type="match status" value="1"/>
</dbReference>
<dbReference type="SMART" id="SM00535">
    <property type="entry name" value="RIBOc"/>
    <property type="match status" value="1"/>
</dbReference>
<dbReference type="SUPFAM" id="SSF54768">
    <property type="entry name" value="dsRNA-binding domain-like"/>
    <property type="match status" value="1"/>
</dbReference>
<dbReference type="SUPFAM" id="SSF69065">
    <property type="entry name" value="RNase III domain-like"/>
    <property type="match status" value="1"/>
</dbReference>
<dbReference type="PROSITE" id="PS50137">
    <property type="entry name" value="DS_RBD"/>
    <property type="match status" value="1"/>
</dbReference>
<dbReference type="PROSITE" id="PS00517">
    <property type="entry name" value="RNASE_3_1"/>
    <property type="match status" value="1"/>
</dbReference>
<dbReference type="PROSITE" id="PS50142">
    <property type="entry name" value="RNASE_3_2"/>
    <property type="match status" value="1"/>
</dbReference>
<feature type="chain" id="PRO_1000075797" description="Ribonuclease 3">
    <location>
        <begin position="1"/>
        <end position="228"/>
    </location>
</feature>
<feature type="domain" description="RNase III" evidence="1">
    <location>
        <begin position="5"/>
        <end position="127"/>
    </location>
</feature>
<feature type="domain" description="DRBM" evidence="1">
    <location>
        <begin position="154"/>
        <end position="224"/>
    </location>
</feature>
<feature type="active site" evidence="1">
    <location>
        <position position="44"/>
    </location>
</feature>
<feature type="active site" evidence="1">
    <location>
        <position position="116"/>
    </location>
</feature>
<feature type="binding site" evidence="1">
    <location>
        <position position="40"/>
    </location>
    <ligand>
        <name>Mg(2+)</name>
        <dbReference type="ChEBI" id="CHEBI:18420"/>
    </ligand>
</feature>
<feature type="binding site" evidence="1">
    <location>
        <position position="113"/>
    </location>
    <ligand>
        <name>Mg(2+)</name>
        <dbReference type="ChEBI" id="CHEBI:18420"/>
    </ligand>
</feature>
<feature type="binding site" evidence="1">
    <location>
        <position position="116"/>
    </location>
    <ligand>
        <name>Mg(2+)</name>
        <dbReference type="ChEBI" id="CHEBI:18420"/>
    </ligand>
</feature>
<comment type="function">
    <text evidence="1">Digests double-stranded RNA. Involved in the processing of primary rRNA transcript to yield the immediate precursors to the large and small rRNAs (23S and 16S). Processes some mRNAs, and tRNAs when they are encoded in the rRNA operon. Processes pre-crRNA and tracrRNA of type II CRISPR loci if present in the organism.</text>
</comment>
<comment type="catalytic activity">
    <reaction evidence="1">
        <text>Endonucleolytic cleavage to 5'-phosphomonoester.</text>
        <dbReference type="EC" id="3.1.26.3"/>
    </reaction>
</comment>
<comment type="cofactor">
    <cofactor evidence="1">
        <name>Mg(2+)</name>
        <dbReference type="ChEBI" id="CHEBI:18420"/>
    </cofactor>
</comment>
<comment type="subunit">
    <text evidence="1">Homodimer.</text>
</comment>
<comment type="subcellular location">
    <subcellularLocation>
        <location evidence="1">Cytoplasm</location>
    </subcellularLocation>
</comment>
<comment type="similarity">
    <text evidence="1">Belongs to the ribonuclease III family.</text>
</comment>
<gene>
    <name evidence="1" type="primary">rnc</name>
    <name type="ordered locus">Rfer_1743</name>
</gene>
<sequence length="228" mass="24824">MNNGLMALQARLQHEFSNPGLLTRALTHRSFSLDHNERLEFLGDSVLGLAVADLLYERLSTLPEGDLSRVRANLVKQDTLHHLALGLGLPEVIRLGEGEARSGGHKRPSILADALEAVIGAVYLDAGFAVAQGLVRRLFQAVEIKSDMEAIGKDPKTELQEWLQGRKMNLPLYRVVATLGAAHKQTFDVECEIVELNFLERGIGGSRRAGEQAAAAAMLQTLKAKAAQ</sequence>
<protein>
    <recommendedName>
        <fullName evidence="1">Ribonuclease 3</fullName>
        <ecNumber evidence="1">3.1.26.3</ecNumber>
    </recommendedName>
    <alternativeName>
        <fullName evidence="1">Ribonuclease III</fullName>
        <shortName evidence="1">RNase III</shortName>
    </alternativeName>
</protein>